<reference key="1">
    <citation type="submission" date="2008-02" db="EMBL/GenBank/DDBJ databases">
        <title>Complete sequence of Escherichia coli C str. ATCC 8739.</title>
        <authorList>
            <person name="Copeland A."/>
            <person name="Lucas S."/>
            <person name="Lapidus A."/>
            <person name="Glavina del Rio T."/>
            <person name="Dalin E."/>
            <person name="Tice H."/>
            <person name="Bruce D."/>
            <person name="Goodwin L."/>
            <person name="Pitluck S."/>
            <person name="Kiss H."/>
            <person name="Brettin T."/>
            <person name="Detter J.C."/>
            <person name="Han C."/>
            <person name="Kuske C.R."/>
            <person name="Schmutz J."/>
            <person name="Larimer F."/>
            <person name="Land M."/>
            <person name="Hauser L."/>
            <person name="Kyrpides N."/>
            <person name="Mikhailova N."/>
            <person name="Ingram L."/>
            <person name="Richardson P."/>
        </authorList>
    </citation>
    <scope>NUCLEOTIDE SEQUENCE [LARGE SCALE GENOMIC DNA]</scope>
    <source>
        <strain>ATCC 8739 / DSM 1576 / NBRC 3972 / NCIMB 8545 / WDCM 00012 / Crooks</strain>
    </source>
</reference>
<dbReference type="EMBL" id="CP000946">
    <property type="protein sequence ID" value="ACA75914.1"/>
    <property type="molecule type" value="Genomic_DNA"/>
</dbReference>
<dbReference type="RefSeq" id="WP_001190062.1">
    <property type="nucleotide sequence ID" value="NZ_MTFT01000017.1"/>
</dbReference>
<dbReference type="SMR" id="B1J0E9"/>
<dbReference type="GeneID" id="93778510"/>
<dbReference type="KEGG" id="ecl:EcolC_0235"/>
<dbReference type="HOGENOM" id="CLU_113319_1_4_6"/>
<dbReference type="GO" id="GO:0003700">
    <property type="term" value="F:DNA-binding transcription factor activity"/>
    <property type="evidence" value="ECO:0007669"/>
    <property type="project" value="UniProtKB-UniRule"/>
</dbReference>
<dbReference type="GO" id="GO:0016151">
    <property type="term" value="F:nickel cation binding"/>
    <property type="evidence" value="ECO:0007669"/>
    <property type="project" value="UniProtKB-UniRule"/>
</dbReference>
<dbReference type="GO" id="GO:0043565">
    <property type="term" value="F:sequence-specific DNA binding"/>
    <property type="evidence" value="ECO:0007669"/>
    <property type="project" value="UniProtKB-ARBA"/>
</dbReference>
<dbReference type="GO" id="GO:0010045">
    <property type="term" value="P:response to nickel cation"/>
    <property type="evidence" value="ECO:0007669"/>
    <property type="project" value="InterPro"/>
</dbReference>
<dbReference type="CDD" id="cd22231">
    <property type="entry name" value="RHH_NikR_HicB-like"/>
    <property type="match status" value="1"/>
</dbReference>
<dbReference type="FunFam" id="1.10.1220.10:FF:000001">
    <property type="entry name" value="Nickel-responsive regulator"/>
    <property type="match status" value="1"/>
</dbReference>
<dbReference type="FunFam" id="3.30.70.1150:FF:000002">
    <property type="entry name" value="Nickel-responsive regulator"/>
    <property type="match status" value="1"/>
</dbReference>
<dbReference type="Gene3D" id="3.30.70.1150">
    <property type="entry name" value="ACT-like. Chain A, domain 2"/>
    <property type="match status" value="1"/>
</dbReference>
<dbReference type="Gene3D" id="1.10.1220.10">
    <property type="entry name" value="Met repressor-like"/>
    <property type="match status" value="1"/>
</dbReference>
<dbReference type="HAMAP" id="MF_00476">
    <property type="entry name" value="NikR"/>
    <property type="match status" value="1"/>
</dbReference>
<dbReference type="InterPro" id="IPR027271">
    <property type="entry name" value="Acetolactate_synth/TF_NikR_C"/>
</dbReference>
<dbReference type="InterPro" id="IPR045865">
    <property type="entry name" value="ACT-like_dom_sf"/>
</dbReference>
<dbReference type="InterPro" id="IPR013321">
    <property type="entry name" value="Arc_rbn_hlx_hlx"/>
</dbReference>
<dbReference type="InterPro" id="IPR002145">
    <property type="entry name" value="CopG"/>
</dbReference>
<dbReference type="InterPro" id="IPR050192">
    <property type="entry name" value="CopG/NikR_regulator"/>
</dbReference>
<dbReference type="InterPro" id="IPR022988">
    <property type="entry name" value="Ni_resp_reg_NikR"/>
</dbReference>
<dbReference type="InterPro" id="IPR014160">
    <property type="entry name" value="Nickel_NikR_proteobac"/>
</dbReference>
<dbReference type="InterPro" id="IPR010985">
    <property type="entry name" value="Ribbon_hlx_hlx"/>
</dbReference>
<dbReference type="InterPro" id="IPR014864">
    <property type="entry name" value="TF_NikR_Ni-bd_C"/>
</dbReference>
<dbReference type="NCBIfam" id="TIGR02793">
    <property type="entry name" value="nikR"/>
    <property type="match status" value="1"/>
</dbReference>
<dbReference type="NCBIfam" id="NF002815">
    <property type="entry name" value="PRK02967.1"/>
    <property type="match status" value="1"/>
</dbReference>
<dbReference type="NCBIfam" id="NF003381">
    <property type="entry name" value="PRK04460.1"/>
    <property type="match status" value="1"/>
</dbReference>
<dbReference type="PANTHER" id="PTHR34719">
    <property type="entry name" value="NICKEL-RESPONSIVE REGULATOR"/>
    <property type="match status" value="1"/>
</dbReference>
<dbReference type="PANTHER" id="PTHR34719:SF2">
    <property type="entry name" value="NICKEL-RESPONSIVE REGULATOR"/>
    <property type="match status" value="1"/>
</dbReference>
<dbReference type="Pfam" id="PF08753">
    <property type="entry name" value="NikR_C"/>
    <property type="match status" value="1"/>
</dbReference>
<dbReference type="Pfam" id="PF01402">
    <property type="entry name" value="RHH_1"/>
    <property type="match status" value="1"/>
</dbReference>
<dbReference type="SUPFAM" id="SSF55021">
    <property type="entry name" value="ACT-like"/>
    <property type="match status" value="1"/>
</dbReference>
<dbReference type="SUPFAM" id="SSF47598">
    <property type="entry name" value="Ribbon-helix-helix"/>
    <property type="match status" value="1"/>
</dbReference>
<keyword id="KW-0238">DNA-binding</keyword>
<keyword id="KW-0479">Metal-binding</keyword>
<keyword id="KW-0533">Nickel</keyword>
<keyword id="KW-0678">Repressor</keyword>
<keyword id="KW-0804">Transcription</keyword>
<keyword id="KW-0805">Transcription regulation</keyword>
<comment type="function">
    <text evidence="1">Transcriptional repressor of the nikABCDE operon. Is active in the presence of excessive concentrations of intracellular nickel.</text>
</comment>
<comment type="cofactor">
    <cofactor evidence="1">
        <name>Ni(2+)</name>
        <dbReference type="ChEBI" id="CHEBI:49786"/>
    </cofactor>
    <text evidence="1">Binds 1 nickel ion per subunit.</text>
</comment>
<comment type="subunit">
    <text evidence="1">Homotetramer.</text>
</comment>
<comment type="similarity">
    <text evidence="1">Belongs to the transcriptional regulatory CopG/NikR family.</text>
</comment>
<sequence length="133" mass="15094">MQRVTITLDDDLLETLDSLSQRRGYNNRSEAIRDILRSALAQEATQQHGTQGFAVLSYVYEHEKRDLASRIVSTQHHHHDLSVATLHVHINHDDCLEIAVLKGDMGDVQHFADDVIAQRGVRHGHLQCLPKED</sequence>
<name>NIKR_ECOLC</name>
<organism>
    <name type="scientific">Escherichia coli (strain ATCC 8739 / DSM 1576 / NBRC 3972 / NCIMB 8545 / WDCM 00012 / Crooks)</name>
    <dbReference type="NCBI Taxonomy" id="481805"/>
    <lineage>
        <taxon>Bacteria</taxon>
        <taxon>Pseudomonadati</taxon>
        <taxon>Pseudomonadota</taxon>
        <taxon>Gammaproteobacteria</taxon>
        <taxon>Enterobacterales</taxon>
        <taxon>Enterobacteriaceae</taxon>
        <taxon>Escherichia</taxon>
    </lineage>
</organism>
<proteinExistence type="inferred from homology"/>
<accession>B1J0E9</accession>
<protein>
    <recommendedName>
        <fullName evidence="1">Nickel-responsive regulator</fullName>
    </recommendedName>
</protein>
<feature type="chain" id="PRO_1000081259" description="Nickel-responsive regulator">
    <location>
        <begin position="1"/>
        <end position="133"/>
    </location>
</feature>
<feature type="binding site" evidence="1">
    <location>
        <position position="76"/>
    </location>
    <ligand>
        <name>Ni(2+)</name>
        <dbReference type="ChEBI" id="CHEBI:49786"/>
    </ligand>
</feature>
<feature type="binding site" evidence="1">
    <location>
        <position position="87"/>
    </location>
    <ligand>
        <name>Ni(2+)</name>
        <dbReference type="ChEBI" id="CHEBI:49786"/>
    </ligand>
</feature>
<feature type="binding site" evidence="1">
    <location>
        <position position="89"/>
    </location>
    <ligand>
        <name>Ni(2+)</name>
        <dbReference type="ChEBI" id="CHEBI:49786"/>
    </ligand>
</feature>
<feature type="binding site" evidence="1">
    <location>
        <position position="95"/>
    </location>
    <ligand>
        <name>Ni(2+)</name>
        <dbReference type="ChEBI" id="CHEBI:49786"/>
    </ligand>
</feature>
<gene>
    <name evidence="1" type="primary">nikR</name>
    <name type="ordered locus">EcolC_0235</name>
</gene>
<evidence type="ECO:0000255" key="1">
    <source>
        <dbReference type="HAMAP-Rule" id="MF_00476"/>
    </source>
</evidence>